<proteinExistence type="evidence at protein level"/>
<sequence length="525" mass="61123">MTIGYRDAAGDPLFPWLMEIKNSMEDLYAGKNSGYDLDKLLFDCISTYKKDSRYRNDLRFLKIWFLYLEGREDFERVYREIEETEICKGHSLLYEWYAIFLEVKGLWRRANSVYQTGLSRKAEPFDRLKEAHSLFLQRISKRTKASSLEKVGDDAQATDLETGFVNPWETSTVNGLIHKIKPQLVKYDGYHVSNKVFPGKANLSSLQNYSRNKIIEIGGRKYQMKGCAGQGGFAQVFKAFIDSNPDEVVALKVQKPPFPWEFHMYRQLDCRIPDSQRSSFGLAQRVHVYSDYSILVCDYLSHGTLQDVINSYVVVGKSMEEVLCMYYTIEMLNMLETLHSVGIIHGDFKPDNLLIRYPPENLTETGFHEKTGSWSKKGLCLVDWGRGIDLSLFPRTTEFTGDCRTSGFRCVEMKEDKPWKFQVDTYGLCVIVHMMLHNVYMEIEKKQSLDGGYINMPRTSFKRYWKVDLWKELFTKLLNRETCEDDTETLRNLRKSMEEYICSDPKLMKKLNELLAKQRISLCSS</sequence>
<protein>
    <recommendedName>
        <fullName>Mitotic checkpoint serine/threonine-protein kinase BUB1</fullName>
        <shortName>AtBUB1</shortName>
        <ecNumber>2.7.11.1</ecNumber>
    </recommendedName>
    <alternativeName>
        <fullName>Protein BUDDING UNINHIBITED BY BENZYMIDAZOL 1</fullName>
    </alternativeName>
</protein>
<gene>
    <name type="primary">BUB1</name>
    <name type="ordered locus">At2g20635</name>
    <name type="ORF">F23N11.4</name>
</gene>
<name>BUB1_ARATH</name>
<evidence type="ECO:0000250" key="1"/>
<evidence type="ECO:0000255" key="2"/>
<evidence type="ECO:0000255" key="3">
    <source>
        <dbReference type="PROSITE-ProRule" id="PRU00159"/>
    </source>
</evidence>
<evidence type="ECO:0000255" key="4">
    <source>
        <dbReference type="PROSITE-ProRule" id="PRU00822"/>
    </source>
</evidence>
<evidence type="ECO:0000255" key="5">
    <source>
        <dbReference type="PROSITE-ProRule" id="PRU10027"/>
    </source>
</evidence>
<evidence type="ECO:0000269" key="6">
    <source>
    </source>
</evidence>
<evidence type="ECO:0000305" key="7"/>
<accession>F4IVI0</accession>
<accession>Q8S8D9</accession>
<keyword id="KW-0053">Apoptosis</keyword>
<keyword id="KW-0067">ATP-binding</keyword>
<keyword id="KW-0131">Cell cycle</keyword>
<keyword id="KW-0132">Cell division</keyword>
<keyword id="KW-0137">Centromere</keyword>
<keyword id="KW-0158">Chromosome</keyword>
<keyword id="KW-0159">Chromosome partition</keyword>
<keyword id="KW-0418">Kinase</keyword>
<keyword id="KW-0995">Kinetochore</keyword>
<keyword id="KW-0498">Mitosis</keyword>
<keyword id="KW-0547">Nucleotide-binding</keyword>
<keyword id="KW-0539">Nucleus</keyword>
<keyword id="KW-1185">Reference proteome</keyword>
<keyword id="KW-0723">Serine/threonine-protein kinase</keyword>
<keyword id="KW-0808">Transferase</keyword>
<keyword id="KW-0832">Ubl conjugation</keyword>
<feature type="chain" id="PRO_0000423378" description="Mitotic checkpoint serine/threonine-protein kinase BUB1">
    <location>
        <begin position="1"/>
        <end position="525"/>
    </location>
</feature>
<feature type="domain" description="BUB1 N-terminal" evidence="4">
    <location>
        <begin position="1"/>
        <end position="162"/>
    </location>
</feature>
<feature type="domain" description="Protein kinase" evidence="3">
    <location>
        <begin position="222"/>
        <end position="520"/>
    </location>
</feature>
<feature type="region of interest" description="Necessary for kinetochore localization" evidence="1">
    <location>
        <begin position="1"/>
        <end position="138"/>
    </location>
</feature>
<feature type="short sequence motif" description="Nuclear localization signal" evidence="2">
    <location>
        <begin position="50"/>
        <end position="57"/>
    </location>
</feature>
<feature type="active site" description="Proton acceptor" evidence="3 5">
    <location>
        <position position="347"/>
    </location>
</feature>
<feature type="binding site" evidence="3">
    <location>
        <begin position="228"/>
        <end position="236"/>
    </location>
    <ligand>
        <name>ATP</name>
        <dbReference type="ChEBI" id="CHEBI:30616"/>
    </ligand>
</feature>
<feature type="binding site" evidence="3">
    <location>
        <position position="252"/>
    </location>
    <ligand>
        <name>ATP</name>
        <dbReference type="ChEBI" id="CHEBI:30616"/>
    </ligand>
</feature>
<organism>
    <name type="scientific">Arabidopsis thaliana</name>
    <name type="common">Mouse-ear cress</name>
    <dbReference type="NCBI Taxonomy" id="3702"/>
    <lineage>
        <taxon>Eukaryota</taxon>
        <taxon>Viridiplantae</taxon>
        <taxon>Streptophyta</taxon>
        <taxon>Embryophyta</taxon>
        <taxon>Tracheophyta</taxon>
        <taxon>Spermatophyta</taxon>
        <taxon>Magnoliopsida</taxon>
        <taxon>eudicotyledons</taxon>
        <taxon>Gunneridae</taxon>
        <taxon>Pentapetalae</taxon>
        <taxon>rosids</taxon>
        <taxon>malvids</taxon>
        <taxon>Brassicales</taxon>
        <taxon>Brassicaceae</taxon>
        <taxon>Camelineae</taxon>
        <taxon>Arabidopsis</taxon>
    </lineage>
</organism>
<reference key="1">
    <citation type="journal article" date="1999" name="Nature">
        <title>Sequence and analysis of chromosome 2 of the plant Arabidopsis thaliana.</title>
        <authorList>
            <person name="Lin X."/>
            <person name="Kaul S."/>
            <person name="Rounsley S.D."/>
            <person name="Shea T.P."/>
            <person name="Benito M.-I."/>
            <person name="Town C.D."/>
            <person name="Fujii C.Y."/>
            <person name="Mason T.M."/>
            <person name="Bowman C.L."/>
            <person name="Barnstead M.E."/>
            <person name="Feldblyum T.V."/>
            <person name="Buell C.R."/>
            <person name="Ketchum K.A."/>
            <person name="Lee J.J."/>
            <person name="Ronning C.M."/>
            <person name="Koo H.L."/>
            <person name="Moffat K.S."/>
            <person name="Cronin L.A."/>
            <person name="Shen M."/>
            <person name="Pai G."/>
            <person name="Van Aken S."/>
            <person name="Umayam L."/>
            <person name="Tallon L.J."/>
            <person name="Gill J.E."/>
            <person name="Adams M.D."/>
            <person name="Carrera A.J."/>
            <person name="Creasy T.H."/>
            <person name="Goodman H.M."/>
            <person name="Somerville C.R."/>
            <person name="Copenhaver G.P."/>
            <person name="Preuss D."/>
            <person name="Nierman W.C."/>
            <person name="White O."/>
            <person name="Eisen J.A."/>
            <person name="Salzberg S.L."/>
            <person name="Fraser C.M."/>
            <person name="Venter J.C."/>
        </authorList>
    </citation>
    <scope>NUCLEOTIDE SEQUENCE [LARGE SCALE GENOMIC DNA]</scope>
    <source>
        <strain>cv. Columbia</strain>
    </source>
</reference>
<reference key="2">
    <citation type="journal article" date="2017" name="Plant J.">
        <title>Araport11: a complete reannotation of the Arabidopsis thaliana reference genome.</title>
        <authorList>
            <person name="Cheng C.Y."/>
            <person name="Krishnakumar V."/>
            <person name="Chan A.P."/>
            <person name="Thibaud-Nissen F."/>
            <person name="Schobel S."/>
            <person name="Town C.D."/>
        </authorList>
    </citation>
    <scope>GENOME REANNOTATION</scope>
    <source>
        <strain>cv. Columbia</strain>
    </source>
</reference>
<reference key="3">
    <citation type="journal article" date="2011" name="PLoS ONE">
        <title>Conserved CDC20 cell cycle functions are carried out by two of the five isoforms in Arabidopsis thaliana.</title>
        <authorList>
            <person name="Kevei Z."/>
            <person name="Baloban M."/>
            <person name="Da Ines O."/>
            <person name="Tiricz H."/>
            <person name="Kroll A."/>
            <person name="Regulski K."/>
            <person name="Mergaert P."/>
            <person name="Kondorosi E."/>
        </authorList>
    </citation>
    <scope>INTERACTION WITH CDC20-1; CDC20-2 AND CDC20-5</scope>
</reference>
<comment type="function">
    <text evidence="1">Serine/threonine-protein kinase that performs 2 crucial functions during mitosis: it is essential for spindle-assembly checkpoint signaling and for correct chromosome alignment. Has a key role in the assembly of checkpoint proteins at the kinetochore. Acts as a substrate for anaphase-promoting complex or cyclosome (APC/C). Necessary for ensuring proper chromosome segregation. Can regulate chromosome segregation in a kinetochore-independent manner. The BUB1-BUB3 complex plays a role in the inhibition of APC/C when spindle-assembly checkpoint is activated and inhibits the ubiquitin ligase activity of APC/C by phosphorylating its activator CDC20. Kinase activity is essential for inhibition of APC/CCDC20 and for chromosome alignment but does not play a major role in the spindle-assembly checkpoint activity (By similarity).</text>
</comment>
<comment type="catalytic activity">
    <reaction>
        <text>L-seryl-[protein] + ATP = O-phospho-L-seryl-[protein] + ADP + H(+)</text>
        <dbReference type="Rhea" id="RHEA:17989"/>
        <dbReference type="Rhea" id="RHEA-COMP:9863"/>
        <dbReference type="Rhea" id="RHEA-COMP:11604"/>
        <dbReference type="ChEBI" id="CHEBI:15378"/>
        <dbReference type="ChEBI" id="CHEBI:29999"/>
        <dbReference type="ChEBI" id="CHEBI:30616"/>
        <dbReference type="ChEBI" id="CHEBI:83421"/>
        <dbReference type="ChEBI" id="CHEBI:456216"/>
        <dbReference type="EC" id="2.7.11.1"/>
    </reaction>
</comment>
<comment type="catalytic activity">
    <reaction>
        <text>L-threonyl-[protein] + ATP = O-phospho-L-threonyl-[protein] + ADP + H(+)</text>
        <dbReference type="Rhea" id="RHEA:46608"/>
        <dbReference type="Rhea" id="RHEA-COMP:11060"/>
        <dbReference type="Rhea" id="RHEA-COMP:11605"/>
        <dbReference type="ChEBI" id="CHEBI:15378"/>
        <dbReference type="ChEBI" id="CHEBI:30013"/>
        <dbReference type="ChEBI" id="CHEBI:30616"/>
        <dbReference type="ChEBI" id="CHEBI:61977"/>
        <dbReference type="ChEBI" id="CHEBI:456216"/>
        <dbReference type="EC" id="2.7.11.1"/>
    </reaction>
</comment>
<comment type="activity regulation">
    <text evidence="1">Autophosphorylated when the cells enters mitosis.</text>
</comment>
<comment type="subunit">
    <text evidence="6">Part of the mitotic checkpoint complex (MCC); interacts with CDC20-1, CDC20-2 and CDC20-5.</text>
</comment>
<comment type="subcellular location">
    <subcellularLocation>
        <location evidence="1">Nucleus</location>
    </subcellularLocation>
    <subcellularLocation>
        <location evidence="1">Chromosome</location>
        <location evidence="1">Centromere</location>
        <location evidence="1">Kinetochore</location>
    </subcellularLocation>
    <text evidence="1">Nuclear in interphase cells. Accumulates gradually during G1 and S phase of the cell cycle, peaks at G2/M, and drops dramatically after mitosis. Localizes to the outer kinetochore. Kinetochore localization is required for normal mitotic timing and checkpoint response to spindle damage and occurs very early in prophase (By similarity).</text>
</comment>
<comment type="domain">
    <text>BUB1 N-terminal domain directs kinetochore localization and binding to BUB3.</text>
</comment>
<comment type="PTM">
    <text evidence="1">Ubiquitinated and degraded during mitotic exit.</text>
</comment>
<comment type="PTM">
    <text evidence="1">Upon spindle-assembly checkpoint activation it is hyperphosphorylated and its kinase activity toward CDC20 is stimulated.</text>
</comment>
<comment type="similarity">
    <text evidence="3">Belongs to the protein kinase superfamily. Ser/Thr protein kinase family. BUB1 subfamily.</text>
</comment>
<comment type="sequence caution" evidence="7">
    <conflict type="erroneous gene model prediction">
        <sequence resource="EMBL-CDS" id="AAM15365"/>
    </conflict>
</comment>
<dbReference type="EC" id="2.7.11.1"/>
<dbReference type="EMBL" id="AC007048">
    <property type="protein sequence ID" value="AAM15365.1"/>
    <property type="status" value="ALT_SEQ"/>
    <property type="molecule type" value="Genomic_DNA"/>
</dbReference>
<dbReference type="EMBL" id="CP002685">
    <property type="protein sequence ID" value="AEC07051.1"/>
    <property type="molecule type" value="Genomic_DNA"/>
</dbReference>
<dbReference type="RefSeq" id="NP_179656.4">
    <property type="nucleotide sequence ID" value="NM_127628.5"/>
</dbReference>
<dbReference type="SMR" id="F4IVI0"/>
<dbReference type="FunCoup" id="F4IVI0">
    <property type="interactions" value="1620"/>
</dbReference>
<dbReference type="STRING" id="3702.F4IVI0"/>
<dbReference type="PaxDb" id="3702-AT2G20635.1"/>
<dbReference type="ProteomicsDB" id="240295"/>
<dbReference type="EnsemblPlants" id="AT2G20635.1">
    <property type="protein sequence ID" value="AT2G20635.1"/>
    <property type="gene ID" value="AT2G20635"/>
</dbReference>
<dbReference type="GeneID" id="816591"/>
<dbReference type="Gramene" id="AT2G20635.1">
    <property type="protein sequence ID" value="AT2G20635.1"/>
    <property type="gene ID" value="AT2G20635"/>
</dbReference>
<dbReference type="KEGG" id="ath:AT2G20635"/>
<dbReference type="Araport" id="AT2G20635"/>
<dbReference type="TAIR" id="AT2G20635"/>
<dbReference type="eggNOG" id="KOG1166">
    <property type="taxonomic scope" value="Eukaryota"/>
</dbReference>
<dbReference type="HOGENOM" id="CLU_036448_1_0_1"/>
<dbReference type="InParanoid" id="F4IVI0"/>
<dbReference type="OMA" id="KSPFKRY"/>
<dbReference type="OrthoDB" id="248495at2759"/>
<dbReference type="PRO" id="PR:F4IVI0"/>
<dbReference type="Proteomes" id="UP000006548">
    <property type="component" value="Chromosome 2"/>
</dbReference>
<dbReference type="ExpressionAtlas" id="F4IVI0">
    <property type="expression patterns" value="baseline and differential"/>
</dbReference>
<dbReference type="GO" id="GO:0005634">
    <property type="term" value="C:nucleus"/>
    <property type="evidence" value="ECO:0007669"/>
    <property type="project" value="UniProtKB-SubCell"/>
</dbReference>
<dbReference type="GO" id="GO:0000940">
    <property type="term" value="C:outer kinetochore"/>
    <property type="evidence" value="ECO:0000250"/>
    <property type="project" value="UniProtKB"/>
</dbReference>
<dbReference type="GO" id="GO:0005524">
    <property type="term" value="F:ATP binding"/>
    <property type="evidence" value="ECO:0007669"/>
    <property type="project" value="UniProtKB-KW"/>
</dbReference>
<dbReference type="GO" id="GO:0004672">
    <property type="term" value="F:protein kinase activity"/>
    <property type="evidence" value="ECO:0000250"/>
    <property type="project" value="UniProtKB"/>
</dbReference>
<dbReference type="GO" id="GO:0106310">
    <property type="term" value="F:protein serine kinase activity"/>
    <property type="evidence" value="ECO:0007669"/>
    <property type="project" value="RHEA"/>
</dbReference>
<dbReference type="GO" id="GO:0004674">
    <property type="term" value="F:protein serine/threonine kinase activity"/>
    <property type="evidence" value="ECO:0007669"/>
    <property type="project" value="UniProtKB-KW"/>
</dbReference>
<dbReference type="GO" id="GO:0051301">
    <property type="term" value="P:cell division"/>
    <property type="evidence" value="ECO:0007669"/>
    <property type="project" value="UniProtKB-KW"/>
</dbReference>
<dbReference type="GO" id="GO:0007059">
    <property type="term" value="P:chromosome segregation"/>
    <property type="evidence" value="ECO:0007669"/>
    <property type="project" value="UniProtKB-KW"/>
</dbReference>
<dbReference type="GO" id="GO:0007094">
    <property type="term" value="P:mitotic spindle assembly checkpoint signaling"/>
    <property type="evidence" value="ECO:0000250"/>
    <property type="project" value="UniProtKB"/>
</dbReference>
<dbReference type="FunFam" id="1.10.510.10:FF:000648">
    <property type="entry name" value="Mitotic checkpoint serine/threonine-protein kinase BUB1"/>
    <property type="match status" value="1"/>
</dbReference>
<dbReference type="Gene3D" id="1.25.40.430">
    <property type="match status" value="1"/>
</dbReference>
<dbReference type="Gene3D" id="1.10.510.10">
    <property type="entry name" value="Transferase(Phosphotransferase) domain 1"/>
    <property type="match status" value="1"/>
</dbReference>
<dbReference type="InterPro" id="IPR015661">
    <property type="entry name" value="Bub1/Mad3"/>
</dbReference>
<dbReference type="InterPro" id="IPR011009">
    <property type="entry name" value="Kinase-like_dom_sf"/>
</dbReference>
<dbReference type="InterPro" id="IPR013212">
    <property type="entry name" value="Mad3/Bub1_I"/>
</dbReference>
<dbReference type="InterPro" id="IPR000719">
    <property type="entry name" value="Prot_kinase_dom"/>
</dbReference>
<dbReference type="InterPro" id="IPR008271">
    <property type="entry name" value="Ser/Thr_kinase_AS"/>
</dbReference>
<dbReference type="PANTHER" id="PTHR14030:SF4">
    <property type="entry name" value="BUB1 KINASE, ISOFORM A-RELATED"/>
    <property type="match status" value="1"/>
</dbReference>
<dbReference type="PANTHER" id="PTHR14030">
    <property type="entry name" value="MITOTIC CHECKPOINT SERINE/THREONINE-PROTEIN KINASE BUB1"/>
    <property type="match status" value="1"/>
</dbReference>
<dbReference type="Pfam" id="PF08311">
    <property type="entry name" value="Mad3_BUB1_I"/>
    <property type="match status" value="1"/>
</dbReference>
<dbReference type="Pfam" id="PF00069">
    <property type="entry name" value="Pkinase"/>
    <property type="match status" value="1"/>
</dbReference>
<dbReference type="SMART" id="SM00777">
    <property type="entry name" value="Mad3_BUB1_I"/>
    <property type="match status" value="1"/>
</dbReference>
<dbReference type="SMART" id="SM00220">
    <property type="entry name" value="S_TKc"/>
    <property type="match status" value="1"/>
</dbReference>
<dbReference type="SUPFAM" id="SSF56112">
    <property type="entry name" value="Protein kinase-like (PK-like)"/>
    <property type="match status" value="1"/>
</dbReference>
<dbReference type="PROSITE" id="PS51489">
    <property type="entry name" value="BUB1_N"/>
    <property type="match status" value="1"/>
</dbReference>
<dbReference type="PROSITE" id="PS50011">
    <property type="entry name" value="PROTEIN_KINASE_DOM"/>
    <property type="match status" value="1"/>
</dbReference>
<dbReference type="PROSITE" id="PS00108">
    <property type="entry name" value="PROTEIN_KINASE_ST"/>
    <property type="match status" value="1"/>
</dbReference>